<keyword id="KW-0025">Alternative splicing</keyword>
<keyword id="KW-0460">Magnesium</keyword>
<keyword id="KW-0464">Manganese</keyword>
<keyword id="KW-0479">Metal-binding</keyword>
<keyword id="KW-0496">Mitochondrion</keyword>
<keyword id="KW-0520">NAD</keyword>
<keyword id="KW-0560">Oxidoreductase</keyword>
<keyword id="KW-1185">Reference proteome</keyword>
<keyword id="KW-0809">Transit peptide</keyword>
<keyword id="KW-0816">Tricarboxylic acid cycle</keyword>
<feature type="transit peptide" description="Mitochondrion" evidence="8">
    <location>
        <begin position="1"/>
        <end status="unknown"/>
    </location>
</feature>
<feature type="chain" id="PRO_0000014442" description="Probable isocitrate dehydrogenase [NAD] subunit alpha, mitochondrial">
    <location>
        <begin status="unknown"/>
        <end position="377"/>
    </location>
</feature>
<feature type="binding site" evidence="1">
    <location>
        <position position="131"/>
    </location>
    <ligand>
        <name>substrate</name>
    </ligand>
</feature>
<feature type="binding site" evidence="1">
    <location>
        <position position="141"/>
    </location>
    <ligand>
        <name>substrate</name>
    </ligand>
</feature>
<feature type="binding site" evidence="1">
    <location>
        <position position="162"/>
    </location>
    <ligand>
        <name>substrate</name>
    </ligand>
</feature>
<feature type="binding site" evidence="2">
    <location>
        <position position="249"/>
    </location>
    <ligand>
        <name>Mg(2+)</name>
        <dbReference type="ChEBI" id="CHEBI:18420"/>
    </ligand>
</feature>
<feature type="binding site" evidence="1">
    <location>
        <position position="249"/>
    </location>
    <ligand>
        <name>substrate</name>
    </ligand>
</feature>
<feature type="binding site" evidence="2">
    <location>
        <position position="273"/>
    </location>
    <ligand>
        <name>Mg(2+)</name>
        <dbReference type="ChEBI" id="CHEBI:18420"/>
    </ligand>
</feature>
<feature type="binding site" evidence="2">
    <location>
        <position position="277"/>
    </location>
    <ligand>
        <name>Mg(2+)</name>
        <dbReference type="ChEBI" id="CHEBI:18420"/>
    </ligand>
</feature>
<feature type="site" description="Critical for catalysis" evidence="1">
    <location>
        <position position="169"/>
    </location>
</feature>
<feature type="site" description="Critical for catalysis" evidence="1">
    <location>
        <position position="216"/>
    </location>
</feature>
<feature type="splice variant" id="VSP_050698" description="In isoform A." evidence="6 7">
    <original>MAARFIQKILNQLGLIAARDAPAVTATPAVSQ</original>
    <variation>MAARFIQKI</variation>
    <location>
        <begin position="1"/>
        <end position="32"/>
    </location>
</feature>
<accession>Q9VWH4</accession>
<accession>E4NKP2</accession>
<accession>Q8IQW9</accession>
<accession>Q8SXH8</accession>
<reference evidence="8" key="1">
    <citation type="journal article" date="2000" name="Science">
        <title>The genome sequence of Drosophila melanogaster.</title>
        <authorList>
            <person name="Adams M.D."/>
            <person name="Celniker S.E."/>
            <person name="Holt R.A."/>
            <person name="Evans C.A."/>
            <person name="Gocayne J.D."/>
            <person name="Amanatides P.G."/>
            <person name="Scherer S.E."/>
            <person name="Li P.W."/>
            <person name="Hoskins R.A."/>
            <person name="Galle R.F."/>
            <person name="George R.A."/>
            <person name="Lewis S.E."/>
            <person name="Richards S."/>
            <person name="Ashburner M."/>
            <person name="Henderson S.N."/>
            <person name="Sutton G.G."/>
            <person name="Wortman J.R."/>
            <person name="Yandell M.D."/>
            <person name="Zhang Q."/>
            <person name="Chen L.X."/>
            <person name="Brandon R.C."/>
            <person name="Rogers Y.-H.C."/>
            <person name="Blazej R.G."/>
            <person name="Champe M."/>
            <person name="Pfeiffer B.D."/>
            <person name="Wan K.H."/>
            <person name="Doyle C."/>
            <person name="Baxter E.G."/>
            <person name="Helt G."/>
            <person name="Nelson C.R."/>
            <person name="Miklos G.L.G."/>
            <person name="Abril J.F."/>
            <person name="Agbayani A."/>
            <person name="An H.-J."/>
            <person name="Andrews-Pfannkoch C."/>
            <person name="Baldwin D."/>
            <person name="Ballew R.M."/>
            <person name="Basu A."/>
            <person name="Baxendale J."/>
            <person name="Bayraktaroglu L."/>
            <person name="Beasley E.M."/>
            <person name="Beeson K.Y."/>
            <person name="Benos P.V."/>
            <person name="Berman B.P."/>
            <person name="Bhandari D."/>
            <person name="Bolshakov S."/>
            <person name="Borkova D."/>
            <person name="Botchan M.R."/>
            <person name="Bouck J."/>
            <person name="Brokstein P."/>
            <person name="Brottier P."/>
            <person name="Burtis K.C."/>
            <person name="Busam D.A."/>
            <person name="Butler H."/>
            <person name="Cadieu E."/>
            <person name="Center A."/>
            <person name="Chandra I."/>
            <person name="Cherry J.M."/>
            <person name="Cawley S."/>
            <person name="Dahlke C."/>
            <person name="Davenport L.B."/>
            <person name="Davies P."/>
            <person name="de Pablos B."/>
            <person name="Delcher A."/>
            <person name="Deng Z."/>
            <person name="Mays A.D."/>
            <person name="Dew I."/>
            <person name="Dietz S.M."/>
            <person name="Dodson K."/>
            <person name="Doup L.E."/>
            <person name="Downes M."/>
            <person name="Dugan-Rocha S."/>
            <person name="Dunkov B.C."/>
            <person name="Dunn P."/>
            <person name="Durbin K.J."/>
            <person name="Evangelista C.C."/>
            <person name="Ferraz C."/>
            <person name="Ferriera S."/>
            <person name="Fleischmann W."/>
            <person name="Fosler C."/>
            <person name="Gabrielian A.E."/>
            <person name="Garg N.S."/>
            <person name="Gelbart W.M."/>
            <person name="Glasser K."/>
            <person name="Glodek A."/>
            <person name="Gong F."/>
            <person name="Gorrell J.H."/>
            <person name="Gu Z."/>
            <person name="Guan P."/>
            <person name="Harris M."/>
            <person name="Harris N.L."/>
            <person name="Harvey D.A."/>
            <person name="Heiman T.J."/>
            <person name="Hernandez J.R."/>
            <person name="Houck J."/>
            <person name="Hostin D."/>
            <person name="Houston K.A."/>
            <person name="Howland T.J."/>
            <person name="Wei M.-H."/>
            <person name="Ibegwam C."/>
            <person name="Jalali M."/>
            <person name="Kalush F."/>
            <person name="Karpen G.H."/>
            <person name="Ke Z."/>
            <person name="Kennison J.A."/>
            <person name="Ketchum K.A."/>
            <person name="Kimmel B.E."/>
            <person name="Kodira C.D."/>
            <person name="Kraft C.L."/>
            <person name="Kravitz S."/>
            <person name="Kulp D."/>
            <person name="Lai Z."/>
            <person name="Lasko P."/>
            <person name="Lei Y."/>
            <person name="Levitsky A.A."/>
            <person name="Li J.H."/>
            <person name="Li Z."/>
            <person name="Liang Y."/>
            <person name="Lin X."/>
            <person name="Liu X."/>
            <person name="Mattei B."/>
            <person name="McIntosh T.C."/>
            <person name="McLeod M.P."/>
            <person name="McPherson D."/>
            <person name="Merkulov G."/>
            <person name="Milshina N.V."/>
            <person name="Mobarry C."/>
            <person name="Morris J."/>
            <person name="Moshrefi A."/>
            <person name="Mount S.M."/>
            <person name="Moy M."/>
            <person name="Murphy B."/>
            <person name="Murphy L."/>
            <person name="Muzny D.M."/>
            <person name="Nelson D.L."/>
            <person name="Nelson D.R."/>
            <person name="Nelson K.A."/>
            <person name="Nixon K."/>
            <person name="Nusskern D.R."/>
            <person name="Pacleb J.M."/>
            <person name="Palazzolo M."/>
            <person name="Pittman G.S."/>
            <person name="Pan S."/>
            <person name="Pollard J."/>
            <person name="Puri V."/>
            <person name="Reese M.G."/>
            <person name="Reinert K."/>
            <person name="Remington K."/>
            <person name="Saunders R.D.C."/>
            <person name="Scheeler F."/>
            <person name="Shen H."/>
            <person name="Shue B.C."/>
            <person name="Siden-Kiamos I."/>
            <person name="Simpson M."/>
            <person name="Skupski M.P."/>
            <person name="Smith T.J."/>
            <person name="Spier E."/>
            <person name="Spradling A.C."/>
            <person name="Stapleton M."/>
            <person name="Strong R."/>
            <person name="Sun E."/>
            <person name="Svirskas R."/>
            <person name="Tector C."/>
            <person name="Turner R."/>
            <person name="Venter E."/>
            <person name="Wang A.H."/>
            <person name="Wang X."/>
            <person name="Wang Z.-Y."/>
            <person name="Wassarman D.A."/>
            <person name="Weinstock G.M."/>
            <person name="Weissenbach J."/>
            <person name="Williams S.M."/>
            <person name="Woodage T."/>
            <person name="Worley K.C."/>
            <person name="Wu D."/>
            <person name="Yang S."/>
            <person name="Yao Q.A."/>
            <person name="Ye J."/>
            <person name="Yeh R.-F."/>
            <person name="Zaveri J.S."/>
            <person name="Zhan M."/>
            <person name="Zhang G."/>
            <person name="Zhao Q."/>
            <person name="Zheng L."/>
            <person name="Zheng X.H."/>
            <person name="Zhong F.N."/>
            <person name="Zhong W."/>
            <person name="Zhou X."/>
            <person name="Zhu S.C."/>
            <person name="Zhu X."/>
            <person name="Smith H.O."/>
            <person name="Gibbs R.A."/>
            <person name="Myers E.W."/>
            <person name="Rubin G.M."/>
            <person name="Venter J.C."/>
        </authorList>
    </citation>
    <scope>NUCLEOTIDE SEQUENCE [LARGE SCALE GENOMIC DNA]</scope>
    <source>
        <strain evidence="4">Berkeley</strain>
    </source>
</reference>
<reference evidence="8" key="2">
    <citation type="journal article" date="2002" name="Genome Biol.">
        <title>Annotation of the Drosophila melanogaster euchromatic genome: a systematic review.</title>
        <authorList>
            <person name="Misra S."/>
            <person name="Crosby M.A."/>
            <person name="Mungall C.J."/>
            <person name="Matthews B.B."/>
            <person name="Campbell K.S."/>
            <person name="Hradecky P."/>
            <person name="Huang Y."/>
            <person name="Kaminker J.S."/>
            <person name="Millburn G.H."/>
            <person name="Prochnik S.E."/>
            <person name="Smith C.D."/>
            <person name="Tupy J.L."/>
            <person name="Whitfield E.J."/>
            <person name="Bayraktaroglu L."/>
            <person name="Berman B.P."/>
            <person name="Bettencourt B.R."/>
            <person name="Celniker S.E."/>
            <person name="de Grey A.D.N.J."/>
            <person name="Drysdale R.A."/>
            <person name="Harris N.L."/>
            <person name="Richter J."/>
            <person name="Russo S."/>
            <person name="Schroeder A.J."/>
            <person name="Shu S.Q."/>
            <person name="Stapleton M."/>
            <person name="Yamada C."/>
            <person name="Ashburner M."/>
            <person name="Gelbart W.M."/>
            <person name="Rubin G.M."/>
            <person name="Lewis S.E."/>
        </authorList>
    </citation>
    <scope>GENOME REANNOTATION</scope>
    <scope>ALTERNATIVE SPLICING</scope>
    <source>
        <strain>Berkeley</strain>
    </source>
</reference>
<reference evidence="8" key="3">
    <citation type="journal article" date="2002" name="Genome Biol.">
        <title>A Drosophila full-length cDNA resource.</title>
        <authorList>
            <person name="Stapleton M."/>
            <person name="Carlson J.W."/>
            <person name="Brokstein P."/>
            <person name="Yu C."/>
            <person name="Champe M."/>
            <person name="George R.A."/>
            <person name="Guarin H."/>
            <person name="Kronmiller B."/>
            <person name="Pacleb J.M."/>
            <person name="Park S."/>
            <person name="Wan K.H."/>
            <person name="Rubin G.M."/>
            <person name="Celniker S.E."/>
        </authorList>
    </citation>
    <scope>NUCLEOTIDE SEQUENCE [LARGE SCALE MRNA] (ISOFORM A)</scope>
    <source>
        <strain evidence="5">Berkeley</strain>
        <tissue evidence="5">Embryo</tissue>
    </source>
</reference>
<reference key="4">
    <citation type="submission" date="2011-08" db="EMBL/GenBank/DDBJ databases">
        <authorList>
            <person name="Carlson J."/>
            <person name="Booth B."/>
            <person name="Frise E."/>
            <person name="Park S."/>
            <person name="Wan K."/>
            <person name="Yu C."/>
            <person name="Hoskins R."/>
            <person name="Svirskas R."/>
            <person name="Rubin G."/>
            <person name="Celniker S."/>
        </authorList>
    </citation>
    <scope>NUCLEOTIDE SEQUENCE [MRNA] (ISOFORM D)</scope>
    <source>
        <strain>Berkeley</strain>
        <tissue>Larva</tissue>
        <tissue>Pupae</tissue>
    </source>
</reference>
<organism evidence="9">
    <name type="scientific">Drosophila melanogaster</name>
    <name type="common">Fruit fly</name>
    <dbReference type="NCBI Taxonomy" id="7227"/>
    <lineage>
        <taxon>Eukaryota</taxon>
        <taxon>Metazoa</taxon>
        <taxon>Ecdysozoa</taxon>
        <taxon>Arthropoda</taxon>
        <taxon>Hexapoda</taxon>
        <taxon>Insecta</taxon>
        <taxon>Pterygota</taxon>
        <taxon>Neoptera</taxon>
        <taxon>Endopterygota</taxon>
        <taxon>Diptera</taxon>
        <taxon>Brachycera</taxon>
        <taxon>Muscomorpha</taxon>
        <taxon>Ephydroidea</taxon>
        <taxon>Drosophilidae</taxon>
        <taxon>Drosophila</taxon>
        <taxon>Sophophora</taxon>
    </lineage>
</organism>
<protein>
    <recommendedName>
        <fullName evidence="3">Probable isocitrate dehydrogenase [NAD] subunit alpha, mitochondrial</fullName>
        <ecNumber evidence="3">1.1.1.41</ecNumber>
    </recommendedName>
    <alternativeName>
        <fullName>Isocitric dehydrogenase subunit alpha</fullName>
    </alternativeName>
    <alternativeName>
        <fullName>NAD(+)-specific ICDH subunit alpha</fullName>
    </alternativeName>
</protein>
<comment type="function">
    <text evidence="2">Probable catalytic subunit of the enzyme which catalyzes the decarboxylation of isocitrate (ICT) into alpha-ketoglutarate.</text>
</comment>
<comment type="catalytic activity">
    <reaction evidence="3">
        <text>D-threo-isocitrate + NAD(+) = 2-oxoglutarate + CO2 + NADH</text>
        <dbReference type="Rhea" id="RHEA:23632"/>
        <dbReference type="ChEBI" id="CHEBI:15562"/>
        <dbReference type="ChEBI" id="CHEBI:16526"/>
        <dbReference type="ChEBI" id="CHEBI:16810"/>
        <dbReference type="ChEBI" id="CHEBI:57540"/>
        <dbReference type="ChEBI" id="CHEBI:57945"/>
        <dbReference type="EC" id="1.1.1.41"/>
    </reaction>
    <physiologicalReaction direction="left-to-right" evidence="3">
        <dbReference type="Rhea" id="RHEA:23633"/>
    </physiologicalReaction>
</comment>
<comment type="cofactor">
    <cofactor evidence="2">
        <name>Mg(2+)</name>
        <dbReference type="ChEBI" id="CHEBI:18420"/>
    </cofactor>
    <cofactor evidence="2">
        <name>Mn(2+)</name>
        <dbReference type="ChEBI" id="CHEBI:29035"/>
    </cofactor>
    <text evidence="2">Binds 1 Mg(2+) or Mn(2+) ion per subunit.</text>
</comment>
<comment type="subunit">
    <text evidence="3">Heterooligomer of subunits alpha, beta, and gamma in the apparent ratio of 2:1:1.</text>
</comment>
<comment type="subcellular location">
    <subcellularLocation>
        <location evidence="1">Mitochondrion</location>
    </subcellularLocation>
</comment>
<comment type="alternative products">
    <event type="alternative splicing"/>
    <isoform>
        <id>Q9VWH4-1</id>
        <name>D</name>
        <sequence type="displayed"/>
    </isoform>
    <isoform>
        <id>Q9VWH4-2</id>
        <name evidence="6">A</name>
        <name>C</name>
        <sequence type="described" ref="VSP_050698"/>
    </isoform>
</comment>
<comment type="similarity">
    <text evidence="8">Belongs to the isocitrate and isopropylmalate dehydrogenases family.</text>
</comment>
<comment type="sequence caution" evidence="8">
    <conflict type="frameshift">
        <sequence resource="EMBL-CDS" id="AAL90367"/>
    </conflict>
</comment>
<evidence type="ECO:0000250" key="1"/>
<evidence type="ECO:0000250" key="2">
    <source>
        <dbReference type="UniProtKB" id="P50213"/>
    </source>
</evidence>
<evidence type="ECO:0000250" key="3">
    <source>
        <dbReference type="UniProtKB" id="P56471"/>
    </source>
</evidence>
<evidence type="ECO:0000269" key="4">
    <source>
    </source>
</evidence>
<evidence type="ECO:0000269" key="5">
    <source>
    </source>
</evidence>
<evidence type="ECO:0000303" key="6">
    <source>
    </source>
</evidence>
<evidence type="ECO:0000303" key="7">
    <source>
    </source>
</evidence>
<evidence type="ECO:0000305" key="8"/>
<evidence type="ECO:0000312" key="9">
    <source>
        <dbReference type="EMBL" id="AAN09496.1"/>
    </source>
</evidence>
<evidence type="ECO:0000312" key="10">
    <source>
        <dbReference type="FlyBase" id="FBgn0027291"/>
    </source>
</evidence>
<sequence>MAARFIQKILNQLGLIAARDAPAVTATPAVSQVNATPAASRSYSSGTKKVTLIPGDGIGPEISAAVQKIFTAANVPIEWEAVDVTPVRGPDGKFGIPQAAIDSVNTNKIGLKGPLMTPVGKGHRSLNLALRKEFNLYANVRPCRSLEGYKTLYDDVDVVTIRENTEGEYSGIEHEIVDGVVQSIKLITEEASKRVAEYAFQYAKNNNRKKVTVVHKANIMRMSDGLFLRCVRDMAQKFPEIQFEEKYLDTVCLNMVQNPGKYDVLVMPNLYGDILSDMCAGLVGGLGLTPSGNMGLNGALFESVHGTAPDIAGKDLANPTALLLSAVMMLRHMELNTYADKIERAAFETIKEGKYLTGDLGGRAKCSEFTNEICAKL</sequence>
<name>IDH3A_DROME</name>
<gene>
    <name evidence="10" type="primary">Idh3a</name>
    <name evidence="10" type="synonym">l(1)G0156</name>
    <name evidence="10" type="ORF">CG12233</name>
</gene>
<dbReference type="EC" id="1.1.1.41" evidence="3"/>
<dbReference type="EMBL" id="AE014298">
    <property type="protein sequence ID" value="AAF48965.2"/>
    <property type="molecule type" value="Genomic_DNA"/>
</dbReference>
<dbReference type="EMBL" id="AE014298">
    <property type="protein sequence ID" value="AAN09496.1"/>
    <property type="molecule type" value="Genomic_DNA"/>
</dbReference>
<dbReference type="EMBL" id="AE014298">
    <property type="protein sequence ID" value="AGB95545.1"/>
    <property type="molecule type" value="Genomic_DNA"/>
</dbReference>
<dbReference type="EMBL" id="AY089629">
    <property type="protein sequence ID" value="AAL90367.1"/>
    <property type="status" value="ALT_FRAME"/>
    <property type="molecule type" value="mRNA"/>
</dbReference>
<dbReference type="EMBL" id="BT125839">
    <property type="protein sequence ID" value="ADR83724.2"/>
    <property type="molecule type" value="mRNA"/>
</dbReference>
<dbReference type="RefSeq" id="NP_001259705.1">
    <molecule id="Q9VWH4-1"/>
    <property type="nucleotide sequence ID" value="NM_001272776.1"/>
</dbReference>
<dbReference type="RefSeq" id="NP_573388.1">
    <molecule id="Q9VWH4-2"/>
    <property type="nucleotide sequence ID" value="NM_133160.2"/>
</dbReference>
<dbReference type="RefSeq" id="NP_728257.2">
    <molecule id="Q9VWH4-2"/>
    <property type="nucleotide sequence ID" value="NM_167657.3"/>
</dbReference>
<dbReference type="SMR" id="Q9VWH4"/>
<dbReference type="BioGRID" id="59242">
    <property type="interactions" value="86"/>
</dbReference>
<dbReference type="ComplexPortal" id="CPX-25751">
    <property type="entry name" value="Mitochondrial isocitrate dehydrogenase complex (NAD+)"/>
</dbReference>
<dbReference type="FunCoup" id="Q9VWH4">
    <property type="interactions" value="1499"/>
</dbReference>
<dbReference type="IntAct" id="Q9VWH4">
    <property type="interactions" value="123"/>
</dbReference>
<dbReference type="STRING" id="7227.FBpp0307649"/>
<dbReference type="GlyGen" id="Q9VWH4">
    <property type="glycosylation" value="1 site"/>
</dbReference>
<dbReference type="PaxDb" id="7227-FBpp0300338"/>
<dbReference type="DNASU" id="32940"/>
<dbReference type="EnsemblMetazoa" id="FBtr0074780">
    <molecule id="Q9VWH4-2"/>
    <property type="protein sequence ID" value="FBpp0074549"/>
    <property type="gene ID" value="FBgn0027291"/>
</dbReference>
<dbReference type="EnsemblMetazoa" id="FBtr0307904">
    <molecule id="Q9VWH4-2"/>
    <property type="protein sequence ID" value="FBpp0300338"/>
    <property type="gene ID" value="FBgn0027291"/>
</dbReference>
<dbReference type="EnsemblMetazoa" id="FBtr0336668">
    <molecule id="Q9VWH4-1"/>
    <property type="protein sequence ID" value="FBpp0307649"/>
    <property type="gene ID" value="FBgn0027291"/>
</dbReference>
<dbReference type="GeneID" id="32940"/>
<dbReference type="KEGG" id="dme:Dmel_CG12233"/>
<dbReference type="AGR" id="FB:FBgn0027291"/>
<dbReference type="CTD" id="3419"/>
<dbReference type="FlyBase" id="FBgn0027291">
    <property type="gene designation" value="Idh3a"/>
</dbReference>
<dbReference type="VEuPathDB" id="VectorBase:FBgn0027291"/>
<dbReference type="eggNOG" id="KOG0785">
    <property type="taxonomic scope" value="Eukaryota"/>
</dbReference>
<dbReference type="GeneTree" id="ENSGT00950000182989"/>
<dbReference type="HOGENOM" id="CLU_031953_0_1_1"/>
<dbReference type="InParanoid" id="Q9VWH4"/>
<dbReference type="OMA" id="VRPCRYY"/>
<dbReference type="OrthoDB" id="10261637at2759"/>
<dbReference type="PhylomeDB" id="Q9VWH4"/>
<dbReference type="Reactome" id="R-DME-71403">
    <property type="pathway name" value="Citric acid cycle (TCA cycle)"/>
</dbReference>
<dbReference type="Reactome" id="R-DME-9837999">
    <property type="pathway name" value="Mitochondrial protein degradation"/>
</dbReference>
<dbReference type="SignaLink" id="Q9VWH4"/>
<dbReference type="BioGRID-ORCS" id="32940">
    <property type="hits" value="0 hits in 1 CRISPR screen"/>
</dbReference>
<dbReference type="GenomeRNAi" id="32940"/>
<dbReference type="PRO" id="PR:Q9VWH4"/>
<dbReference type="Proteomes" id="UP000000803">
    <property type="component" value="Chromosome X"/>
</dbReference>
<dbReference type="Bgee" id="FBgn0027291">
    <property type="expression patterns" value="Expressed in second segment of antenna (Drosophila) and 281 other cell types or tissues"/>
</dbReference>
<dbReference type="GO" id="GO:0045242">
    <property type="term" value="C:isocitrate dehydrogenase complex (NAD+)"/>
    <property type="evidence" value="ECO:0000250"/>
    <property type="project" value="FlyBase"/>
</dbReference>
<dbReference type="GO" id="GO:0005759">
    <property type="term" value="C:mitochondrial matrix"/>
    <property type="evidence" value="ECO:0000269"/>
    <property type="project" value="FlyBase"/>
</dbReference>
<dbReference type="GO" id="GO:0005739">
    <property type="term" value="C:mitochondrion"/>
    <property type="evidence" value="ECO:0007005"/>
    <property type="project" value="FlyBase"/>
</dbReference>
<dbReference type="GO" id="GO:0004449">
    <property type="term" value="F:isocitrate dehydrogenase (NAD+) activity"/>
    <property type="evidence" value="ECO:0000315"/>
    <property type="project" value="FlyBase"/>
</dbReference>
<dbReference type="GO" id="GO:0000287">
    <property type="term" value="F:magnesium ion binding"/>
    <property type="evidence" value="ECO:0007669"/>
    <property type="project" value="InterPro"/>
</dbReference>
<dbReference type="GO" id="GO:0051287">
    <property type="term" value="F:NAD binding"/>
    <property type="evidence" value="ECO:0007669"/>
    <property type="project" value="InterPro"/>
</dbReference>
<dbReference type="GO" id="GO:0006102">
    <property type="term" value="P:isocitrate metabolic process"/>
    <property type="evidence" value="ECO:0000318"/>
    <property type="project" value="GO_Central"/>
</dbReference>
<dbReference type="GO" id="GO:0006099">
    <property type="term" value="P:tricarboxylic acid cycle"/>
    <property type="evidence" value="ECO:0000315"/>
    <property type="project" value="FlyBase"/>
</dbReference>
<dbReference type="FunFam" id="3.40.718.10:FF:000003">
    <property type="entry name" value="Isocitrate dehydrogenase [NAD] subunit, mitochondrial"/>
    <property type="match status" value="1"/>
</dbReference>
<dbReference type="Gene3D" id="3.40.718.10">
    <property type="entry name" value="Isopropylmalate Dehydrogenase"/>
    <property type="match status" value="1"/>
</dbReference>
<dbReference type="InterPro" id="IPR019818">
    <property type="entry name" value="IsoCit/isopropylmalate_DH_CS"/>
</dbReference>
<dbReference type="InterPro" id="IPR004434">
    <property type="entry name" value="Isocitrate_DH_NAD"/>
</dbReference>
<dbReference type="InterPro" id="IPR024084">
    <property type="entry name" value="IsoPropMal-DH-like_dom"/>
</dbReference>
<dbReference type="NCBIfam" id="TIGR00175">
    <property type="entry name" value="mito_nad_idh"/>
    <property type="match status" value="1"/>
</dbReference>
<dbReference type="PANTHER" id="PTHR11835">
    <property type="entry name" value="DECARBOXYLATING DEHYDROGENASES-ISOCITRATE, ISOPROPYLMALATE, TARTRATE"/>
    <property type="match status" value="1"/>
</dbReference>
<dbReference type="PANTHER" id="PTHR11835:SF34">
    <property type="entry name" value="ISOCITRATE DEHYDROGENASE [NAD] SUBUNIT ALPHA, MITOCHONDRIAL"/>
    <property type="match status" value="1"/>
</dbReference>
<dbReference type="Pfam" id="PF00180">
    <property type="entry name" value="Iso_dh"/>
    <property type="match status" value="1"/>
</dbReference>
<dbReference type="SMART" id="SM01329">
    <property type="entry name" value="Iso_dh"/>
    <property type="match status" value="1"/>
</dbReference>
<dbReference type="SUPFAM" id="SSF53659">
    <property type="entry name" value="Isocitrate/Isopropylmalate dehydrogenase-like"/>
    <property type="match status" value="1"/>
</dbReference>
<dbReference type="PROSITE" id="PS00470">
    <property type="entry name" value="IDH_IMDH"/>
    <property type="match status" value="1"/>
</dbReference>
<proteinExistence type="evidence at transcript level"/>